<reference key="1">
    <citation type="journal article" date="2008" name="PLoS Genet.">
        <title>Complete genome sequence of the N2-fixing broad host range endophyte Klebsiella pneumoniae 342 and virulence predictions verified in mice.</title>
        <authorList>
            <person name="Fouts D.E."/>
            <person name="Tyler H.L."/>
            <person name="DeBoy R.T."/>
            <person name="Daugherty S."/>
            <person name="Ren Q."/>
            <person name="Badger J.H."/>
            <person name="Durkin A.S."/>
            <person name="Huot H."/>
            <person name="Shrivastava S."/>
            <person name="Kothari S."/>
            <person name="Dodson R.J."/>
            <person name="Mohamoud Y."/>
            <person name="Khouri H."/>
            <person name="Roesch L.F.W."/>
            <person name="Krogfelt K.A."/>
            <person name="Struve C."/>
            <person name="Triplett E.W."/>
            <person name="Methe B.A."/>
        </authorList>
    </citation>
    <scope>NUCLEOTIDE SEQUENCE [LARGE SCALE GENOMIC DNA]</scope>
    <source>
        <strain>342</strain>
    </source>
</reference>
<proteinExistence type="inferred from homology"/>
<feature type="chain" id="PRO_1000129933" description="Cell division protein FtsB">
    <location>
        <begin position="1"/>
        <end position="105"/>
    </location>
</feature>
<feature type="topological domain" description="Cytoplasmic" evidence="1">
    <location>
        <begin position="1"/>
        <end position="3"/>
    </location>
</feature>
<feature type="transmembrane region" description="Helical" evidence="1">
    <location>
        <begin position="4"/>
        <end position="21"/>
    </location>
</feature>
<feature type="topological domain" description="Periplasmic" evidence="1">
    <location>
        <begin position="22"/>
        <end position="105"/>
    </location>
</feature>
<feature type="coiled-coil region" evidence="1">
    <location>
        <begin position="33"/>
        <end position="62"/>
    </location>
</feature>
<sequence length="105" mass="11951">MGKLTLLLLALLVWLQYSLWFGKNGLHDYTRVNDDVTAQQATNAKLKARNDQLFAEIDDLNGGQEAIEERARNELSMTRPGETFYRLVPDASKRNQASGQQQNNR</sequence>
<comment type="function">
    <text evidence="1">Essential cell division protein. May link together the upstream cell division proteins, which are predominantly cytoplasmic, with the downstream cell division proteins, which are predominantly periplasmic.</text>
</comment>
<comment type="subunit">
    <text evidence="1">Part of a complex composed of FtsB, FtsL and FtsQ.</text>
</comment>
<comment type="subcellular location">
    <subcellularLocation>
        <location evidence="1">Cell inner membrane</location>
        <topology evidence="1">Single-pass type II membrane protein</topology>
    </subcellularLocation>
    <text evidence="1">Localizes to the division septum.</text>
</comment>
<comment type="similarity">
    <text evidence="1">Belongs to the FtsB family.</text>
</comment>
<dbReference type="EMBL" id="CP000964">
    <property type="protein sequence ID" value="ACI08696.1"/>
    <property type="molecule type" value="Genomic_DNA"/>
</dbReference>
<dbReference type="SMR" id="B5XV33"/>
<dbReference type="KEGG" id="kpe:KPK_1013"/>
<dbReference type="HOGENOM" id="CLU_134863_5_2_6"/>
<dbReference type="Proteomes" id="UP000001734">
    <property type="component" value="Chromosome"/>
</dbReference>
<dbReference type="GO" id="GO:0032153">
    <property type="term" value="C:cell division site"/>
    <property type="evidence" value="ECO:0007669"/>
    <property type="project" value="UniProtKB-UniRule"/>
</dbReference>
<dbReference type="GO" id="GO:0030428">
    <property type="term" value="C:cell septum"/>
    <property type="evidence" value="ECO:0007669"/>
    <property type="project" value="TreeGrafter"/>
</dbReference>
<dbReference type="GO" id="GO:0005886">
    <property type="term" value="C:plasma membrane"/>
    <property type="evidence" value="ECO:0007669"/>
    <property type="project" value="UniProtKB-SubCell"/>
</dbReference>
<dbReference type="GO" id="GO:0043093">
    <property type="term" value="P:FtsZ-dependent cytokinesis"/>
    <property type="evidence" value="ECO:0007669"/>
    <property type="project" value="UniProtKB-UniRule"/>
</dbReference>
<dbReference type="FunFam" id="1.20.5.400:FF:000001">
    <property type="entry name" value="Cell division protein FtsB"/>
    <property type="match status" value="1"/>
</dbReference>
<dbReference type="Gene3D" id="1.20.5.400">
    <property type="match status" value="1"/>
</dbReference>
<dbReference type="HAMAP" id="MF_00599">
    <property type="entry name" value="FtsB"/>
    <property type="match status" value="1"/>
</dbReference>
<dbReference type="InterPro" id="IPR023081">
    <property type="entry name" value="Cell_div_FtsB"/>
</dbReference>
<dbReference type="InterPro" id="IPR007060">
    <property type="entry name" value="FtsL/DivIC"/>
</dbReference>
<dbReference type="NCBIfam" id="NF002058">
    <property type="entry name" value="PRK00888.1"/>
    <property type="match status" value="1"/>
</dbReference>
<dbReference type="PANTHER" id="PTHR37485">
    <property type="entry name" value="CELL DIVISION PROTEIN FTSB"/>
    <property type="match status" value="1"/>
</dbReference>
<dbReference type="PANTHER" id="PTHR37485:SF1">
    <property type="entry name" value="CELL DIVISION PROTEIN FTSB"/>
    <property type="match status" value="1"/>
</dbReference>
<dbReference type="Pfam" id="PF04977">
    <property type="entry name" value="DivIC"/>
    <property type="match status" value="1"/>
</dbReference>
<name>FTSB_KLEP3</name>
<organism>
    <name type="scientific">Klebsiella pneumoniae (strain 342)</name>
    <dbReference type="NCBI Taxonomy" id="507522"/>
    <lineage>
        <taxon>Bacteria</taxon>
        <taxon>Pseudomonadati</taxon>
        <taxon>Pseudomonadota</taxon>
        <taxon>Gammaproteobacteria</taxon>
        <taxon>Enterobacterales</taxon>
        <taxon>Enterobacteriaceae</taxon>
        <taxon>Klebsiella/Raoultella group</taxon>
        <taxon>Klebsiella</taxon>
        <taxon>Klebsiella pneumoniae complex</taxon>
    </lineage>
</organism>
<gene>
    <name evidence="1" type="primary">ftsB</name>
    <name type="ordered locus">KPK_1013</name>
</gene>
<protein>
    <recommendedName>
        <fullName evidence="1">Cell division protein FtsB</fullName>
    </recommendedName>
</protein>
<evidence type="ECO:0000255" key="1">
    <source>
        <dbReference type="HAMAP-Rule" id="MF_00599"/>
    </source>
</evidence>
<accession>B5XV33</accession>
<keyword id="KW-0131">Cell cycle</keyword>
<keyword id="KW-0132">Cell division</keyword>
<keyword id="KW-0997">Cell inner membrane</keyword>
<keyword id="KW-1003">Cell membrane</keyword>
<keyword id="KW-0175">Coiled coil</keyword>
<keyword id="KW-0472">Membrane</keyword>
<keyword id="KW-0812">Transmembrane</keyword>
<keyword id="KW-1133">Transmembrane helix</keyword>